<organism>
    <name type="scientific">Mesocricetus auratus</name>
    <name type="common">Golden hamster</name>
    <dbReference type="NCBI Taxonomy" id="10036"/>
    <lineage>
        <taxon>Eukaryota</taxon>
        <taxon>Metazoa</taxon>
        <taxon>Chordata</taxon>
        <taxon>Craniata</taxon>
        <taxon>Vertebrata</taxon>
        <taxon>Euteleostomi</taxon>
        <taxon>Mammalia</taxon>
        <taxon>Eutheria</taxon>
        <taxon>Euarchontoglires</taxon>
        <taxon>Glires</taxon>
        <taxon>Rodentia</taxon>
        <taxon>Myomorpha</taxon>
        <taxon>Muroidea</taxon>
        <taxon>Cricetidae</taxon>
        <taxon>Cricetinae</taxon>
        <taxon>Mesocricetus</taxon>
    </lineage>
</organism>
<evidence type="ECO:0000250" key="1">
    <source>
        <dbReference type="UniProtKB" id="P15690"/>
    </source>
</evidence>
<evidence type="ECO:0000250" key="2">
    <source>
        <dbReference type="UniProtKB" id="P28331"/>
    </source>
</evidence>
<evidence type="ECO:0000250" key="3">
    <source>
        <dbReference type="UniProtKB" id="P29915"/>
    </source>
</evidence>
<evidence type="ECO:0000250" key="4">
    <source>
        <dbReference type="UniProtKB" id="Q91VD9"/>
    </source>
</evidence>
<evidence type="ECO:0000255" key="5"/>
<evidence type="ECO:0000305" key="6"/>
<proteinExistence type="evidence at protein level"/>
<accession>P86203</accession>
<feature type="chain" id="PRO_0000394295" description="NADH-ubiquinone oxidoreductase 75 kDa subunit, mitochondrial">
    <location>
        <begin position="1" status="less than"/>
        <end position="190" status="greater than"/>
    </location>
</feature>
<feature type="non-consecutive residues" evidence="6">
    <location>
        <begin position="16"/>
        <end position="17"/>
    </location>
</feature>
<feature type="non-consecutive residues" evidence="6">
    <location>
        <begin position="36"/>
        <end position="37"/>
    </location>
</feature>
<feature type="non-consecutive residues" evidence="6">
    <location>
        <begin position="44"/>
        <end position="45"/>
    </location>
</feature>
<feature type="non-consecutive residues" evidence="6">
    <location>
        <begin position="53"/>
        <end position="54"/>
    </location>
</feature>
<feature type="non-consecutive residues" evidence="6">
    <location>
        <begin position="67"/>
        <end position="68"/>
    </location>
</feature>
<feature type="non-consecutive residues" evidence="6">
    <location>
        <begin position="76"/>
        <end position="77"/>
    </location>
</feature>
<feature type="non-consecutive residues" evidence="6">
    <location>
        <begin position="98"/>
        <end position="99"/>
    </location>
</feature>
<feature type="non-consecutive residues" evidence="6">
    <location>
        <begin position="137"/>
        <end position="138"/>
    </location>
</feature>
<feature type="non-consecutive residues" evidence="6">
    <location>
        <begin position="147"/>
        <end position="148"/>
    </location>
</feature>
<feature type="non-consecutive residues" evidence="6">
    <location>
        <begin position="161"/>
        <end position="162"/>
    </location>
</feature>
<feature type="non-consecutive residues" evidence="6">
    <location>
        <begin position="180"/>
        <end position="181"/>
    </location>
</feature>
<feature type="non-terminal residue">
    <location>
        <position position="1"/>
    </location>
</feature>
<feature type="non-terminal residue">
    <location>
        <position position="190"/>
    </location>
</feature>
<sequence>FASEIAGVDDLGTTGRKTESIDVMDAVGSNIVVSTRFAYDGLKRQRLTEPMVRGLLTYTSWEDALSRFEAPLFNARVALIGSPVDLTYRYDHLGDSPKIASQVAALDLGYKPGVEAIRKNPPKLLFLLGADGGCITRSATYVNTEGRVAVTPPGLAREDWKALSEIAGITLPYDTLDQVRDFYMTDSISR</sequence>
<name>NDUS1_MESAU</name>
<dbReference type="EC" id="7.1.1.2" evidence="2"/>
<dbReference type="Proteomes" id="UP000189706">
    <property type="component" value="Unplaced"/>
</dbReference>
<dbReference type="GO" id="GO:0005743">
    <property type="term" value="C:mitochondrial inner membrane"/>
    <property type="evidence" value="ECO:0000250"/>
    <property type="project" value="UniProtKB"/>
</dbReference>
<dbReference type="GO" id="GO:0005739">
    <property type="term" value="C:mitochondrion"/>
    <property type="evidence" value="ECO:0000250"/>
    <property type="project" value="UniProtKB"/>
</dbReference>
<dbReference type="GO" id="GO:0051537">
    <property type="term" value="F:2 iron, 2 sulfur cluster binding"/>
    <property type="evidence" value="ECO:0007669"/>
    <property type="project" value="UniProtKB-KW"/>
</dbReference>
<dbReference type="GO" id="GO:0051539">
    <property type="term" value="F:4 iron, 4 sulfur cluster binding"/>
    <property type="evidence" value="ECO:0007669"/>
    <property type="project" value="UniProtKB-KW"/>
</dbReference>
<dbReference type="GO" id="GO:0046872">
    <property type="term" value="F:metal ion binding"/>
    <property type="evidence" value="ECO:0007669"/>
    <property type="project" value="UniProtKB-KW"/>
</dbReference>
<dbReference type="GO" id="GO:0008137">
    <property type="term" value="F:NADH dehydrogenase (ubiquinone) activity"/>
    <property type="evidence" value="ECO:0000250"/>
    <property type="project" value="UniProtKB"/>
</dbReference>
<dbReference type="GO" id="GO:0006120">
    <property type="term" value="P:mitochondrial electron transport, NADH to ubiquinone"/>
    <property type="evidence" value="ECO:0000250"/>
    <property type="project" value="UniProtKB"/>
</dbReference>
<dbReference type="GO" id="GO:0032981">
    <property type="term" value="P:mitochondrial respiratory chain complex I assembly"/>
    <property type="evidence" value="ECO:0000250"/>
    <property type="project" value="UniProtKB"/>
</dbReference>
<dbReference type="InterPro" id="IPR006963">
    <property type="entry name" value="Mopterin_OxRdtase_4Fe-4S_dom"/>
</dbReference>
<dbReference type="InterPro" id="IPR050123">
    <property type="entry name" value="Prok_molybdopt-oxidoreductase"/>
</dbReference>
<dbReference type="PANTHER" id="PTHR43105:SF13">
    <property type="entry name" value="NADH-UBIQUINONE OXIDOREDUCTASE 75 KDA SUBUNIT, MITOCHONDRIAL"/>
    <property type="match status" value="1"/>
</dbReference>
<dbReference type="PANTHER" id="PTHR43105">
    <property type="entry name" value="RESPIRATORY NITRATE REDUCTASE"/>
    <property type="match status" value="1"/>
</dbReference>
<dbReference type="Pfam" id="PF22151">
    <property type="entry name" value="Fer4_NDSU1"/>
    <property type="match status" value="1"/>
</dbReference>
<dbReference type="SUPFAM" id="SSF53706">
    <property type="entry name" value="Formate dehydrogenase/DMSO reductase, domains 1-3"/>
    <property type="match status" value="1"/>
</dbReference>
<comment type="function">
    <text evidence="2">Core subunit of the mitochondrial membrane respiratory chain NADH dehydrogenase (Complex I) which catalyzes electron transfer from NADH through the respiratory chain, using ubiquinone as an electron acceptor (By similarity). Essential for catalysing the entry and efficient transfer of electrons within complex I (By similarity). Plays a key role in the assembly and stability of complex I and participates in the association of complex I with ubiquinol-cytochrome reductase complex (Complex III) to form supercomplexes (By similarity).</text>
</comment>
<comment type="catalytic activity">
    <reaction evidence="2">
        <text>a ubiquinone + NADH + 5 H(+)(in) = a ubiquinol + NAD(+) + 4 H(+)(out)</text>
        <dbReference type="Rhea" id="RHEA:29091"/>
        <dbReference type="Rhea" id="RHEA-COMP:9565"/>
        <dbReference type="Rhea" id="RHEA-COMP:9566"/>
        <dbReference type="ChEBI" id="CHEBI:15378"/>
        <dbReference type="ChEBI" id="CHEBI:16389"/>
        <dbReference type="ChEBI" id="CHEBI:17976"/>
        <dbReference type="ChEBI" id="CHEBI:57540"/>
        <dbReference type="ChEBI" id="CHEBI:57945"/>
        <dbReference type="EC" id="7.1.1.2"/>
    </reaction>
</comment>
<comment type="cofactor">
    <cofactor evidence="3">
        <name>[2Fe-2S] cluster</name>
        <dbReference type="ChEBI" id="CHEBI:190135"/>
    </cofactor>
    <text evidence="3">Binds 1 [2Fe-2S] cluster per subunit.</text>
</comment>
<comment type="cofactor">
    <cofactor evidence="3">
        <name>[4Fe-4S] cluster</name>
        <dbReference type="ChEBI" id="CHEBI:49883"/>
    </cofactor>
    <text evidence="3">Binds 2 [4Fe-4S] clusters per subunit.</text>
</comment>
<comment type="subunit">
    <text evidence="1 2 4">Core subunit of respiratory chain NADH dehydrogenase (Complex I) which is composed of 45 different subunits (By similarity). This is the largest subunit of complex I and it is a component of the iron-sulfur (IP) fragment of the enzyme (By similarity). Complex I associates with ubiquinol-cytochrome reductase complex (Complex III) to form supercomplexes (By similarity). Interacts with MDM2 and AKAP1 (By similarity).</text>
</comment>
<comment type="subcellular location">
    <subcellularLocation>
        <location evidence="1">Mitochondrion inner membrane</location>
        <topology evidence="1">Peripheral membrane protein</topology>
        <orientation evidence="1">Matrix side</orientation>
    </subcellularLocation>
</comment>
<comment type="similarity">
    <text evidence="5">Belongs to the complex I 75 kDa subunit family.</text>
</comment>
<keyword id="KW-0001">2Fe-2S</keyword>
<keyword id="KW-0004">4Fe-4S</keyword>
<keyword id="KW-0249">Electron transport</keyword>
<keyword id="KW-0408">Iron</keyword>
<keyword id="KW-0411">Iron-sulfur</keyword>
<keyword id="KW-0472">Membrane</keyword>
<keyword id="KW-0479">Metal-binding</keyword>
<keyword id="KW-0496">Mitochondrion</keyword>
<keyword id="KW-0999">Mitochondrion inner membrane</keyword>
<keyword id="KW-0520">NAD</keyword>
<keyword id="KW-0560">Oxidoreductase</keyword>
<keyword id="KW-1185">Reference proteome</keyword>
<keyword id="KW-0679">Respiratory chain</keyword>
<keyword id="KW-1278">Translocase</keyword>
<keyword id="KW-0813">Transport</keyword>
<keyword id="KW-0830">Ubiquinone</keyword>
<gene>
    <name evidence="1" type="primary">NDUFS1</name>
</gene>
<protein>
    <recommendedName>
        <fullName evidence="1">NADH-ubiquinone oxidoreductase 75 kDa subunit, mitochondrial</fullName>
        <ecNumber evidence="2">7.1.1.2</ecNumber>
    </recommendedName>
    <alternativeName>
        <fullName evidence="1">Complex I-75kD</fullName>
        <shortName evidence="1">CI-75kD</shortName>
    </alternativeName>
</protein>
<reference key="1">
    <citation type="journal article" date="2010" name="Asian J. Androl.">
        <title>Glucose-regulated protein precursor (GRP78) and tumor rejection antigen (GP96) are unique to hamster caput epididymal spermatozoa.</title>
        <authorList>
            <person name="Kameshwari D.B."/>
            <person name="Bhande S."/>
            <person name="Sundaram C.S."/>
            <person name="Kota V."/>
            <person name="Siva A.B."/>
            <person name="Shivaji S."/>
        </authorList>
    </citation>
    <scope>IDENTIFICATION BY MASS SPECTROMETRY</scope>
</reference>